<protein>
    <recommendedName>
        <fullName evidence="1">Photosystem II CP43 reaction center protein</fullName>
    </recommendedName>
    <alternativeName>
        <fullName evidence="1">PSII 43 kDa protein</fullName>
    </alternativeName>
    <alternativeName>
        <fullName evidence="1">Protein CP-43</fullName>
    </alternativeName>
</protein>
<accession>Q8HB52</accession>
<gene>
    <name evidence="1" type="primary">psbC</name>
</gene>
<proteinExistence type="inferred from homology"/>
<sequence length="473" mass="51755">MKTLYSLRRSYPVETLFNGTIALAGRDQETTGFAWWAGNARLINLSGKLLGAHVAHAGLIVFWAGAMNLFEVAHFVPEKPMYEQGLILLPHLATLGWGVGPGGEIVDTFPYFVSGVLHLISSAVLGFGGIYHALIGPETLEESFPFFGYVWKDRNKMTTILGIHLILLGAGAFLLVLKALYFGGVYDTWAPGGGDVRKITNPTLNPSAIFGYLLKSPFGGEGWIVSVDNLEDIIGGHVWLGSICIFGGIWHILTKPFAWARRAFVWSGEAYLSYSLAALSLFGFIACCFVWFNNTAYPSEFYGPTGPEASQAQAFTFLVRDQRLGASVGSAQGPTGLGKYLMRSPTGEIIFGGETMRFWDLRAPWLEPLRGPNGLDLSKLRKDIQPWQERRSAEYMTHAPLGSSNSVGGVATEINAVNYVSPRSWLSTSHFVLGFFLFIGHLWHAGRARAAAAGFEKGIDRDFEPVLSMTPLN</sequence>
<geneLocation type="chloroplast"/>
<dbReference type="EMBL" id="AY147791">
    <property type="protein sequence ID" value="AAN46371.1"/>
    <property type="molecule type" value="Genomic_DNA"/>
</dbReference>
<dbReference type="EMBL" id="AY147792">
    <property type="protein sequence ID" value="AAN46372.1"/>
    <property type="molecule type" value="Genomic_DNA"/>
</dbReference>
<dbReference type="RefSeq" id="YP_009642607.1">
    <property type="nucleotide sequence ID" value="NC_042410.1"/>
</dbReference>
<dbReference type="SMR" id="Q8HB52"/>
<dbReference type="GeneID" id="40344761"/>
<dbReference type="GO" id="GO:0009535">
    <property type="term" value="C:chloroplast thylakoid membrane"/>
    <property type="evidence" value="ECO:0007669"/>
    <property type="project" value="UniProtKB-SubCell"/>
</dbReference>
<dbReference type="GO" id="GO:0009523">
    <property type="term" value="C:photosystem II"/>
    <property type="evidence" value="ECO:0007669"/>
    <property type="project" value="UniProtKB-KW"/>
</dbReference>
<dbReference type="GO" id="GO:0016168">
    <property type="term" value="F:chlorophyll binding"/>
    <property type="evidence" value="ECO:0007669"/>
    <property type="project" value="UniProtKB-UniRule"/>
</dbReference>
<dbReference type="GO" id="GO:0045156">
    <property type="term" value="F:electron transporter, transferring electrons within the cyclic electron transport pathway of photosynthesis activity"/>
    <property type="evidence" value="ECO:0007669"/>
    <property type="project" value="InterPro"/>
</dbReference>
<dbReference type="GO" id="GO:0046872">
    <property type="term" value="F:metal ion binding"/>
    <property type="evidence" value="ECO:0007669"/>
    <property type="project" value="UniProtKB-KW"/>
</dbReference>
<dbReference type="GO" id="GO:0009772">
    <property type="term" value="P:photosynthetic electron transport in photosystem II"/>
    <property type="evidence" value="ECO:0007669"/>
    <property type="project" value="InterPro"/>
</dbReference>
<dbReference type="FunFam" id="1.10.10.670:FF:000001">
    <property type="entry name" value="Photosystem II CP43 reaction center protein"/>
    <property type="match status" value="1"/>
</dbReference>
<dbReference type="Gene3D" id="1.10.10.670">
    <property type="entry name" value="photosystem ii from thermosynechococcus elongatus"/>
    <property type="match status" value="1"/>
</dbReference>
<dbReference type="HAMAP" id="MF_01496">
    <property type="entry name" value="PSII_PsbC_CP43"/>
    <property type="match status" value="1"/>
</dbReference>
<dbReference type="InterPro" id="IPR000932">
    <property type="entry name" value="PS_antenna-like"/>
</dbReference>
<dbReference type="InterPro" id="IPR036001">
    <property type="entry name" value="PS_II_antenna-like_sf"/>
</dbReference>
<dbReference type="InterPro" id="IPR005869">
    <property type="entry name" value="PSII_PsbC"/>
</dbReference>
<dbReference type="InterPro" id="IPR044900">
    <property type="entry name" value="PSII_PsbC_sf"/>
</dbReference>
<dbReference type="NCBIfam" id="TIGR01153">
    <property type="entry name" value="psbC"/>
    <property type="match status" value="1"/>
</dbReference>
<dbReference type="Pfam" id="PF00421">
    <property type="entry name" value="PSII"/>
    <property type="match status" value="1"/>
</dbReference>
<dbReference type="SUPFAM" id="SSF161077">
    <property type="entry name" value="Photosystem II antenna protein-like"/>
    <property type="match status" value="1"/>
</dbReference>
<evidence type="ECO:0000255" key="1">
    <source>
        <dbReference type="HAMAP-Rule" id="MF_01496"/>
    </source>
</evidence>
<reference key="1">
    <citation type="journal article" date="2002" name="Proc. Natl. Acad. Sci. U.S.A.">
        <title>Wind-dispersed pollen mediates postglacial gene flow among refugia.</title>
        <authorList>
            <person name="Liepelt S."/>
            <person name="Bialozyt R."/>
            <person name="Ziegenhagen B."/>
        </authorList>
    </citation>
    <scope>NUCLEOTIDE SEQUENCE [GENOMIC DNA]</scope>
</reference>
<feature type="propeptide" id="PRO_0000431102" evidence="1">
    <location>
        <begin position="1"/>
        <end position="14"/>
    </location>
</feature>
<feature type="chain" id="PRO_0000077505" description="Photosystem II CP43 reaction center protein" evidence="1">
    <location>
        <begin position="15"/>
        <end position="473"/>
    </location>
</feature>
<feature type="transmembrane region" description="Helical" evidence="1">
    <location>
        <begin position="69"/>
        <end position="93"/>
    </location>
</feature>
<feature type="transmembrane region" description="Helical" evidence="1">
    <location>
        <begin position="134"/>
        <end position="155"/>
    </location>
</feature>
<feature type="transmembrane region" description="Helical" evidence="1">
    <location>
        <begin position="178"/>
        <end position="200"/>
    </location>
</feature>
<feature type="transmembrane region" description="Helical" evidence="1">
    <location>
        <begin position="255"/>
        <end position="275"/>
    </location>
</feature>
<feature type="transmembrane region" description="Helical" evidence="1">
    <location>
        <begin position="291"/>
        <end position="312"/>
    </location>
</feature>
<feature type="transmembrane region" description="Helical" evidence="1">
    <location>
        <begin position="447"/>
        <end position="471"/>
    </location>
</feature>
<feature type="binding site" evidence="1">
    <location>
        <position position="367"/>
    </location>
    <ligand>
        <name>[CaMn4O5] cluster</name>
        <dbReference type="ChEBI" id="CHEBI:189552"/>
    </ligand>
</feature>
<feature type="modified residue" description="N-acetylthreonine" evidence="1">
    <location>
        <position position="15"/>
    </location>
</feature>
<feature type="modified residue" description="Phosphothreonine" evidence="1">
    <location>
        <position position="15"/>
    </location>
</feature>
<keyword id="KW-0007">Acetylation</keyword>
<keyword id="KW-0148">Chlorophyll</keyword>
<keyword id="KW-0150">Chloroplast</keyword>
<keyword id="KW-0157">Chromophore</keyword>
<keyword id="KW-0464">Manganese</keyword>
<keyword id="KW-0472">Membrane</keyword>
<keyword id="KW-0479">Metal-binding</keyword>
<keyword id="KW-0597">Phosphoprotein</keyword>
<keyword id="KW-0602">Photosynthesis</keyword>
<keyword id="KW-0604">Photosystem II</keyword>
<keyword id="KW-0934">Plastid</keyword>
<keyword id="KW-0793">Thylakoid</keyword>
<keyword id="KW-0812">Transmembrane</keyword>
<keyword id="KW-1133">Transmembrane helix</keyword>
<comment type="function">
    <text evidence="1">One of the components of the core complex of photosystem II (PSII). It binds chlorophyll and helps catalyze the primary light-induced photochemical processes of PSII. PSII is a light-driven water:plastoquinone oxidoreductase, using light energy to abstract electrons from H(2)O, generating O(2) and a proton gradient subsequently used for ATP formation.</text>
</comment>
<comment type="cofactor">
    <text evidence="1">Binds multiple chlorophylls and provides some of the ligands for the Ca-4Mn-5O cluster of the oxygen-evolving complex. It may also provide a ligand for a Cl- that is required for oxygen evolution. PSII binds additional chlorophylls, carotenoids and specific lipids.</text>
</comment>
<comment type="subunit">
    <text evidence="1">PSII is composed of 1 copy each of membrane proteins PsbA, PsbB, PsbC, PsbD, PsbE, PsbF, PsbH, PsbI, PsbJ, PsbK, PsbL, PsbM, PsbT, PsbX, PsbY, PsbZ, Psb30/Ycf12, at least 3 peripheral proteins of the oxygen-evolving complex and a large number of cofactors. It forms dimeric complexes.</text>
</comment>
<comment type="subcellular location">
    <subcellularLocation>
        <location evidence="1">Plastid</location>
        <location evidence="1">Chloroplast thylakoid membrane</location>
        <topology evidence="1">Multi-pass membrane protein</topology>
    </subcellularLocation>
</comment>
<comment type="similarity">
    <text evidence="1">Belongs to the PsbB/PsbC family. PsbC subfamily.</text>
</comment>
<name>PSBC_ABIAL</name>
<organism>
    <name type="scientific">Abies alba</name>
    <name type="common">Edeltanne</name>
    <name type="synonym">European silver fir</name>
    <dbReference type="NCBI Taxonomy" id="45372"/>
    <lineage>
        <taxon>Eukaryota</taxon>
        <taxon>Viridiplantae</taxon>
        <taxon>Streptophyta</taxon>
        <taxon>Embryophyta</taxon>
        <taxon>Tracheophyta</taxon>
        <taxon>Spermatophyta</taxon>
        <taxon>Pinopsida</taxon>
        <taxon>Pinidae</taxon>
        <taxon>Conifers I</taxon>
        <taxon>Pinales</taxon>
        <taxon>Pinaceae</taxon>
        <taxon>Abies</taxon>
    </lineage>
</organism>